<proteinExistence type="inferred from homology"/>
<organism>
    <name type="scientific">Ralstonia pickettii (strain 12J)</name>
    <dbReference type="NCBI Taxonomy" id="402626"/>
    <lineage>
        <taxon>Bacteria</taxon>
        <taxon>Pseudomonadati</taxon>
        <taxon>Pseudomonadota</taxon>
        <taxon>Betaproteobacteria</taxon>
        <taxon>Burkholderiales</taxon>
        <taxon>Burkholderiaceae</taxon>
        <taxon>Ralstonia</taxon>
    </lineage>
</organism>
<accession>B2UG80</accession>
<evidence type="ECO:0000255" key="1">
    <source>
        <dbReference type="HAMAP-Rule" id="MF_00259"/>
    </source>
</evidence>
<dbReference type="EC" id="2.1.2.10" evidence="1"/>
<dbReference type="EMBL" id="CP001068">
    <property type="protein sequence ID" value="ACD28607.1"/>
    <property type="molecule type" value="Genomic_DNA"/>
</dbReference>
<dbReference type="SMR" id="B2UG80"/>
<dbReference type="STRING" id="402626.Rpic_3487"/>
<dbReference type="KEGG" id="rpi:Rpic_3487"/>
<dbReference type="eggNOG" id="COG0404">
    <property type="taxonomic scope" value="Bacteria"/>
</dbReference>
<dbReference type="HOGENOM" id="CLU_007884_10_2_4"/>
<dbReference type="GO" id="GO:0005829">
    <property type="term" value="C:cytosol"/>
    <property type="evidence" value="ECO:0007669"/>
    <property type="project" value="TreeGrafter"/>
</dbReference>
<dbReference type="GO" id="GO:0005960">
    <property type="term" value="C:glycine cleavage complex"/>
    <property type="evidence" value="ECO:0007669"/>
    <property type="project" value="InterPro"/>
</dbReference>
<dbReference type="GO" id="GO:0004047">
    <property type="term" value="F:aminomethyltransferase activity"/>
    <property type="evidence" value="ECO:0007669"/>
    <property type="project" value="UniProtKB-UniRule"/>
</dbReference>
<dbReference type="GO" id="GO:0008483">
    <property type="term" value="F:transaminase activity"/>
    <property type="evidence" value="ECO:0007669"/>
    <property type="project" value="UniProtKB-KW"/>
</dbReference>
<dbReference type="GO" id="GO:0019464">
    <property type="term" value="P:glycine decarboxylation via glycine cleavage system"/>
    <property type="evidence" value="ECO:0007669"/>
    <property type="project" value="UniProtKB-UniRule"/>
</dbReference>
<dbReference type="FunFam" id="3.30.70.1400:FF:000001">
    <property type="entry name" value="Aminomethyltransferase"/>
    <property type="match status" value="1"/>
</dbReference>
<dbReference type="FunFam" id="4.10.1250.10:FF:000001">
    <property type="entry name" value="Aminomethyltransferase"/>
    <property type="match status" value="1"/>
</dbReference>
<dbReference type="Gene3D" id="2.40.30.110">
    <property type="entry name" value="Aminomethyltransferase beta-barrel domains"/>
    <property type="match status" value="1"/>
</dbReference>
<dbReference type="Gene3D" id="3.30.70.1400">
    <property type="entry name" value="Aminomethyltransferase beta-barrel domains"/>
    <property type="match status" value="1"/>
</dbReference>
<dbReference type="Gene3D" id="4.10.1250.10">
    <property type="entry name" value="Aminomethyltransferase fragment"/>
    <property type="match status" value="1"/>
</dbReference>
<dbReference type="Gene3D" id="3.30.1360.120">
    <property type="entry name" value="Probable tRNA modification gtpase trme, domain 1"/>
    <property type="match status" value="1"/>
</dbReference>
<dbReference type="HAMAP" id="MF_00259">
    <property type="entry name" value="GcvT"/>
    <property type="match status" value="1"/>
</dbReference>
<dbReference type="InterPro" id="IPR006223">
    <property type="entry name" value="GCS_T"/>
</dbReference>
<dbReference type="InterPro" id="IPR022903">
    <property type="entry name" value="GCS_T_bac"/>
</dbReference>
<dbReference type="InterPro" id="IPR013977">
    <property type="entry name" value="GCST_C"/>
</dbReference>
<dbReference type="InterPro" id="IPR006222">
    <property type="entry name" value="GCV_T_N"/>
</dbReference>
<dbReference type="InterPro" id="IPR028896">
    <property type="entry name" value="GcvT/YgfZ/DmdA"/>
</dbReference>
<dbReference type="InterPro" id="IPR029043">
    <property type="entry name" value="GcvT/YgfZ_C"/>
</dbReference>
<dbReference type="InterPro" id="IPR027266">
    <property type="entry name" value="TrmE/GcvT_dom1"/>
</dbReference>
<dbReference type="NCBIfam" id="TIGR00528">
    <property type="entry name" value="gcvT"/>
    <property type="match status" value="1"/>
</dbReference>
<dbReference type="NCBIfam" id="NF001567">
    <property type="entry name" value="PRK00389.1"/>
    <property type="match status" value="1"/>
</dbReference>
<dbReference type="PANTHER" id="PTHR43757">
    <property type="entry name" value="AMINOMETHYLTRANSFERASE"/>
    <property type="match status" value="1"/>
</dbReference>
<dbReference type="PANTHER" id="PTHR43757:SF2">
    <property type="entry name" value="AMINOMETHYLTRANSFERASE, MITOCHONDRIAL"/>
    <property type="match status" value="1"/>
</dbReference>
<dbReference type="Pfam" id="PF01571">
    <property type="entry name" value="GCV_T"/>
    <property type="match status" value="1"/>
</dbReference>
<dbReference type="Pfam" id="PF08669">
    <property type="entry name" value="GCV_T_C"/>
    <property type="match status" value="1"/>
</dbReference>
<dbReference type="PIRSF" id="PIRSF006487">
    <property type="entry name" value="GcvT"/>
    <property type="match status" value="1"/>
</dbReference>
<dbReference type="SUPFAM" id="SSF101790">
    <property type="entry name" value="Aminomethyltransferase beta-barrel domain"/>
    <property type="match status" value="1"/>
</dbReference>
<dbReference type="SUPFAM" id="SSF103025">
    <property type="entry name" value="Folate-binding domain"/>
    <property type="match status" value="1"/>
</dbReference>
<reference key="1">
    <citation type="submission" date="2008-05" db="EMBL/GenBank/DDBJ databases">
        <title>Complete sequence of chromosome 1 of Ralstonia pickettii 12J.</title>
        <authorList>
            <person name="Lucas S."/>
            <person name="Copeland A."/>
            <person name="Lapidus A."/>
            <person name="Glavina del Rio T."/>
            <person name="Dalin E."/>
            <person name="Tice H."/>
            <person name="Bruce D."/>
            <person name="Goodwin L."/>
            <person name="Pitluck S."/>
            <person name="Meincke L."/>
            <person name="Brettin T."/>
            <person name="Detter J.C."/>
            <person name="Han C."/>
            <person name="Kuske C.R."/>
            <person name="Schmutz J."/>
            <person name="Larimer F."/>
            <person name="Land M."/>
            <person name="Hauser L."/>
            <person name="Kyrpides N."/>
            <person name="Mikhailova N."/>
            <person name="Marsh T."/>
            <person name="Richardson P."/>
        </authorList>
    </citation>
    <scope>NUCLEOTIDE SEQUENCE [LARGE SCALE GENOMIC DNA]</scope>
    <source>
        <strain>12J</strain>
    </source>
</reference>
<protein>
    <recommendedName>
        <fullName evidence="1">Aminomethyltransferase</fullName>
        <ecNumber evidence="1">2.1.2.10</ecNumber>
    </recommendedName>
    <alternativeName>
        <fullName evidence="1">Glycine cleavage system T protein</fullName>
    </alternativeName>
</protein>
<comment type="function">
    <text evidence="1">The glycine cleavage system catalyzes the degradation of glycine.</text>
</comment>
<comment type="catalytic activity">
    <reaction evidence="1">
        <text>N(6)-[(R)-S(8)-aminomethyldihydrolipoyl]-L-lysyl-[protein] + (6S)-5,6,7,8-tetrahydrofolate = N(6)-[(R)-dihydrolipoyl]-L-lysyl-[protein] + (6R)-5,10-methylene-5,6,7,8-tetrahydrofolate + NH4(+)</text>
        <dbReference type="Rhea" id="RHEA:16945"/>
        <dbReference type="Rhea" id="RHEA-COMP:10475"/>
        <dbReference type="Rhea" id="RHEA-COMP:10492"/>
        <dbReference type="ChEBI" id="CHEBI:15636"/>
        <dbReference type="ChEBI" id="CHEBI:28938"/>
        <dbReference type="ChEBI" id="CHEBI:57453"/>
        <dbReference type="ChEBI" id="CHEBI:83100"/>
        <dbReference type="ChEBI" id="CHEBI:83143"/>
        <dbReference type="EC" id="2.1.2.10"/>
    </reaction>
</comment>
<comment type="subunit">
    <text evidence="1">The glycine cleavage system is composed of four proteins: P, T, L and H.</text>
</comment>
<comment type="similarity">
    <text evidence="1">Belongs to the GcvT family.</text>
</comment>
<sequence length="375" mass="40148">MTLQHTPLNAIHRSLGARMVDFGGWDMPVNYGSQIEEHHAVRQDAGVFDVSHMCVVDLTGARVRDFLRGLLANNVDKLQTPGKALYSCMLNPKGGVIDDLIVYFFREDWFRLVVNAGTAPTDLEWIVAQNAAAGTDVTITPRRSDNNAGAEPLGILAVQGPNARAKTYAALPGSQAVGDALKPFNAGFVTVENVGEIMVARTGYTGEDGFELVVPAAQIAGVWERLLQAGVRPAGLGARDTLRLEAGMNLYGQDMDEHVSPLDAGLAWTVDLQSERDFTGKAALQAGGQREQFVGLILRDKGGVLRAHQKVITAAGDGEITSGTFSPSLSLSIALARLPKEVPVGTDVQVEIRDRKLTATVVKLPFVRNGKALVS</sequence>
<gene>
    <name evidence="1" type="primary">gcvT</name>
    <name type="ordered locus">Rpic_3487</name>
</gene>
<name>GCST_RALPJ</name>
<feature type="chain" id="PRO_1000114108" description="Aminomethyltransferase">
    <location>
        <begin position="1"/>
        <end position="375"/>
    </location>
</feature>
<keyword id="KW-0032">Aminotransferase</keyword>
<keyword id="KW-0808">Transferase</keyword>